<organism>
    <name type="scientific">Thermococcus onnurineus (strain NA1)</name>
    <dbReference type="NCBI Taxonomy" id="523850"/>
    <lineage>
        <taxon>Archaea</taxon>
        <taxon>Methanobacteriati</taxon>
        <taxon>Methanobacteriota</taxon>
        <taxon>Thermococci</taxon>
        <taxon>Thermococcales</taxon>
        <taxon>Thermococcaceae</taxon>
        <taxon>Thermococcus</taxon>
    </lineage>
</organism>
<comment type="catalytic activity">
    <reaction evidence="1">
        <text>AMP + ATP = 2 ADP</text>
        <dbReference type="Rhea" id="RHEA:12973"/>
        <dbReference type="ChEBI" id="CHEBI:30616"/>
        <dbReference type="ChEBI" id="CHEBI:456215"/>
        <dbReference type="ChEBI" id="CHEBI:456216"/>
        <dbReference type="EC" id="2.7.4.3"/>
    </reaction>
</comment>
<comment type="subcellular location">
    <subcellularLocation>
        <location evidence="1">Cytoplasm</location>
    </subcellularLocation>
</comment>
<comment type="similarity">
    <text evidence="1">Belongs to the archaeal adenylate kinase family.</text>
</comment>
<accession>B6YSN8</accession>
<name>KADA_THEON</name>
<sequence>MPFVVMITGIPGVGKSTITRLALRKARAKFRLVNFGDLMFEEAVRAGLVEHRDEMRKLNPNVQKELQMKAARRIVEMAKTEPILIDTHATIRTPVGYLLGFPKEVIEVINPNFIVIIEATPSEILGRRLRDLKRDRDVETEEQIQRHQDLNRAAAVSYAMHSNALIKIIENHEDKGLEEAVHELVEVLDLAVGEYD</sequence>
<gene>
    <name evidence="1" type="primary">adkA</name>
    <name type="ordered locus">TON_0090</name>
</gene>
<reference key="1">
    <citation type="journal article" date="2008" name="J. Bacteriol.">
        <title>The complete genome sequence of Thermococcus onnurineus NA1 reveals a mixed heterotrophic and carboxydotrophic metabolism.</title>
        <authorList>
            <person name="Lee H.S."/>
            <person name="Kang S.G."/>
            <person name="Bae S.S."/>
            <person name="Lim J.K."/>
            <person name="Cho Y."/>
            <person name="Kim Y.J."/>
            <person name="Jeon J.H."/>
            <person name="Cha S.-S."/>
            <person name="Kwon K.K."/>
            <person name="Kim H.-T."/>
            <person name="Park C.-J."/>
            <person name="Lee H.-W."/>
            <person name="Kim S.I."/>
            <person name="Chun J."/>
            <person name="Colwell R.R."/>
            <person name="Kim S.-J."/>
            <person name="Lee J.-H."/>
        </authorList>
    </citation>
    <scope>NUCLEOTIDE SEQUENCE [LARGE SCALE GENOMIC DNA]</scope>
    <source>
        <strain>NA1</strain>
    </source>
</reference>
<protein>
    <recommendedName>
        <fullName evidence="1">Adenylate kinase</fullName>
        <shortName evidence="1">AK</shortName>
        <ecNumber evidence="1">2.7.4.3</ecNumber>
    </recommendedName>
    <alternativeName>
        <fullName evidence="1">ATP-AMP transphosphorylase</fullName>
    </alternativeName>
</protein>
<proteinExistence type="inferred from homology"/>
<feature type="chain" id="PRO_1000100518" description="Adenylate kinase">
    <location>
        <begin position="1"/>
        <end position="196"/>
    </location>
</feature>
<feature type="binding site" evidence="1">
    <location>
        <begin position="9"/>
        <end position="17"/>
    </location>
    <ligand>
        <name>ATP</name>
        <dbReference type="ChEBI" id="CHEBI:30616"/>
    </ligand>
</feature>
<keyword id="KW-0067">ATP-binding</keyword>
<keyword id="KW-0963">Cytoplasm</keyword>
<keyword id="KW-0418">Kinase</keyword>
<keyword id="KW-0547">Nucleotide-binding</keyword>
<keyword id="KW-0808">Transferase</keyword>
<dbReference type="EC" id="2.7.4.3" evidence="1"/>
<dbReference type="EMBL" id="CP000855">
    <property type="protein sequence ID" value="ACJ15575.1"/>
    <property type="molecule type" value="Genomic_DNA"/>
</dbReference>
<dbReference type="RefSeq" id="WP_012571048.1">
    <property type="nucleotide sequence ID" value="NC_011529.1"/>
</dbReference>
<dbReference type="SMR" id="B6YSN8"/>
<dbReference type="STRING" id="523850.TON_0090"/>
<dbReference type="GeneID" id="7017737"/>
<dbReference type="KEGG" id="ton:TON_0090"/>
<dbReference type="PATRIC" id="fig|523850.10.peg.90"/>
<dbReference type="eggNOG" id="arCOG01039">
    <property type="taxonomic scope" value="Archaea"/>
</dbReference>
<dbReference type="HOGENOM" id="CLU_119371_0_0_2"/>
<dbReference type="OrthoDB" id="26198at2157"/>
<dbReference type="Proteomes" id="UP000002727">
    <property type="component" value="Chromosome"/>
</dbReference>
<dbReference type="GO" id="GO:0005737">
    <property type="term" value="C:cytoplasm"/>
    <property type="evidence" value="ECO:0007669"/>
    <property type="project" value="UniProtKB-SubCell"/>
</dbReference>
<dbReference type="GO" id="GO:0004017">
    <property type="term" value="F:adenylate kinase activity"/>
    <property type="evidence" value="ECO:0007669"/>
    <property type="project" value="UniProtKB-UniRule"/>
</dbReference>
<dbReference type="GO" id="GO:0005524">
    <property type="term" value="F:ATP binding"/>
    <property type="evidence" value="ECO:0007669"/>
    <property type="project" value="UniProtKB-UniRule"/>
</dbReference>
<dbReference type="Gene3D" id="3.40.50.300">
    <property type="entry name" value="P-loop containing nucleotide triphosphate hydrolases"/>
    <property type="match status" value="1"/>
</dbReference>
<dbReference type="HAMAP" id="MF_00234">
    <property type="entry name" value="Adenylate_kinase_AdkA"/>
    <property type="match status" value="1"/>
</dbReference>
<dbReference type="InterPro" id="IPR023477">
    <property type="entry name" value="Adenylate_kinase_AdkA"/>
</dbReference>
<dbReference type="InterPro" id="IPR027417">
    <property type="entry name" value="P-loop_NTPase"/>
</dbReference>
<dbReference type="NCBIfam" id="NF003122">
    <property type="entry name" value="PRK04040.1"/>
    <property type="match status" value="1"/>
</dbReference>
<dbReference type="Pfam" id="PF13207">
    <property type="entry name" value="AAA_17"/>
    <property type="match status" value="1"/>
</dbReference>
<dbReference type="SUPFAM" id="SSF52540">
    <property type="entry name" value="P-loop containing nucleoside triphosphate hydrolases"/>
    <property type="match status" value="1"/>
</dbReference>
<evidence type="ECO:0000255" key="1">
    <source>
        <dbReference type="HAMAP-Rule" id="MF_00234"/>
    </source>
</evidence>